<protein>
    <recommendedName>
        <fullName evidence="1">Ribonuclease P protein component</fullName>
        <shortName evidence="1">RNase P protein</shortName>
        <shortName evidence="1">RNaseP protein</shortName>
        <ecNumber evidence="1">3.1.26.5</ecNumber>
    </recommendedName>
    <alternativeName>
        <fullName evidence="1">Protein C5</fullName>
    </alternativeName>
</protein>
<organism>
    <name type="scientific">Pasteurella multocida (strain Pm70)</name>
    <dbReference type="NCBI Taxonomy" id="272843"/>
    <lineage>
        <taxon>Bacteria</taxon>
        <taxon>Pseudomonadati</taxon>
        <taxon>Pseudomonadota</taxon>
        <taxon>Gammaproteobacteria</taxon>
        <taxon>Pasteurellales</taxon>
        <taxon>Pasteurellaceae</taxon>
        <taxon>Pasteurella</taxon>
    </lineage>
</organism>
<accession>P57915</accession>
<proteinExistence type="inferred from homology"/>
<keyword id="KW-0255">Endonuclease</keyword>
<keyword id="KW-0378">Hydrolase</keyword>
<keyword id="KW-0540">Nuclease</keyword>
<keyword id="KW-1185">Reference proteome</keyword>
<keyword id="KW-0694">RNA-binding</keyword>
<keyword id="KW-0819">tRNA processing</keyword>
<reference key="1">
    <citation type="journal article" date="2001" name="Proc. Natl. Acad. Sci. U.S.A.">
        <title>Complete genomic sequence of Pasteurella multocida Pm70.</title>
        <authorList>
            <person name="May B.J."/>
            <person name="Zhang Q."/>
            <person name="Li L.L."/>
            <person name="Paustian M.L."/>
            <person name="Whittam T.S."/>
            <person name="Kapur V."/>
        </authorList>
    </citation>
    <scope>NUCLEOTIDE SEQUENCE [LARGE SCALE GENOMIC DNA]</scope>
    <source>
        <strain>Pm70</strain>
    </source>
</reference>
<sequence>MIKLNFSRELRLLTPLHFKYVFEQPFRASTPELTILARPNNLAHPRLGLTVAKKHLKKAHDRNRIKRLCRESFRLAQYKLPNCDFVIVAKQGIGKLDNRTLTQTLDKLWQRHIRLAQKS</sequence>
<dbReference type="EC" id="3.1.26.5" evidence="1"/>
<dbReference type="EMBL" id="AE004439">
    <property type="protein sequence ID" value="AAK03247.1"/>
    <property type="status" value="ALT_INIT"/>
    <property type="molecule type" value="Genomic_DNA"/>
</dbReference>
<dbReference type="RefSeq" id="WP_005717538.1">
    <property type="nucleotide sequence ID" value="NC_002663.1"/>
</dbReference>
<dbReference type="SMR" id="P57915"/>
<dbReference type="STRING" id="272843.PM1163"/>
<dbReference type="EnsemblBacteria" id="AAK03247">
    <property type="protein sequence ID" value="AAK03247"/>
    <property type="gene ID" value="PM1163"/>
</dbReference>
<dbReference type="GeneID" id="77206479"/>
<dbReference type="KEGG" id="pmu:PM1163"/>
<dbReference type="HOGENOM" id="CLU_117179_11_0_6"/>
<dbReference type="OrthoDB" id="9796422at2"/>
<dbReference type="Proteomes" id="UP000000809">
    <property type="component" value="Chromosome"/>
</dbReference>
<dbReference type="GO" id="GO:0030677">
    <property type="term" value="C:ribonuclease P complex"/>
    <property type="evidence" value="ECO:0007669"/>
    <property type="project" value="TreeGrafter"/>
</dbReference>
<dbReference type="GO" id="GO:0042781">
    <property type="term" value="F:3'-tRNA processing endoribonuclease activity"/>
    <property type="evidence" value="ECO:0007669"/>
    <property type="project" value="TreeGrafter"/>
</dbReference>
<dbReference type="GO" id="GO:0004526">
    <property type="term" value="F:ribonuclease P activity"/>
    <property type="evidence" value="ECO:0007669"/>
    <property type="project" value="UniProtKB-UniRule"/>
</dbReference>
<dbReference type="GO" id="GO:0000049">
    <property type="term" value="F:tRNA binding"/>
    <property type="evidence" value="ECO:0007669"/>
    <property type="project" value="UniProtKB-UniRule"/>
</dbReference>
<dbReference type="GO" id="GO:0001682">
    <property type="term" value="P:tRNA 5'-leader removal"/>
    <property type="evidence" value="ECO:0007669"/>
    <property type="project" value="UniProtKB-UniRule"/>
</dbReference>
<dbReference type="FunFam" id="3.30.230.10:FF:000016">
    <property type="entry name" value="Ribonuclease P protein component"/>
    <property type="match status" value="1"/>
</dbReference>
<dbReference type="Gene3D" id="3.30.230.10">
    <property type="match status" value="1"/>
</dbReference>
<dbReference type="HAMAP" id="MF_00227">
    <property type="entry name" value="RNase_P"/>
    <property type="match status" value="1"/>
</dbReference>
<dbReference type="InterPro" id="IPR020568">
    <property type="entry name" value="Ribosomal_Su5_D2-typ_SF"/>
</dbReference>
<dbReference type="InterPro" id="IPR014721">
    <property type="entry name" value="Ribsml_uS5_D2-typ_fold_subgr"/>
</dbReference>
<dbReference type="InterPro" id="IPR000100">
    <property type="entry name" value="RNase_P"/>
</dbReference>
<dbReference type="NCBIfam" id="TIGR00188">
    <property type="entry name" value="rnpA"/>
    <property type="match status" value="1"/>
</dbReference>
<dbReference type="PANTHER" id="PTHR33992">
    <property type="entry name" value="RIBONUCLEASE P PROTEIN COMPONENT"/>
    <property type="match status" value="1"/>
</dbReference>
<dbReference type="PANTHER" id="PTHR33992:SF1">
    <property type="entry name" value="RIBONUCLEASE P PROTEIN COMPONENT"/>
    <property type="match status" value="1"/>
</dbReference>
<dbReference type="Pfam" id="PF00825">
    <property type="entry name" value="Ribonuclease_P"/>
    <property type="match status" value="1"/>
</dbReference>
<dbReference type="SUPFAM" id="SSF54211">
    <property type="entry name" value="Ribosomal protein S5 domain 2-like"/>
    <property type="match status" value="1"/>
</dbReference>
<gene>
    <name evidence="1" type="primary">rnpA</name>
    <name type="ordered locus">PM1163</name>
</gene>
<comment type="function">
    <text evidence="1">RNaseP catalyzes the removal of the 5'-leader sequence from pre-tRNA to produce the mature 5'-terminus. It can also cleave other RNA substrates such as 4.5S RNA. The protein component plays an auxiliary but essential role in vivo by binding to the 5'-leader sequence and broadening the substrate specificity of the ribozyme.</text>
</comment>
<comment type="catalytic activity">
    <reaction evidence="1">
        <text>Endonucleolytic cleavage of RNA, removing 5'-extranucleotides from tRNA precursor.</text>
        <dbReference type="EC" id="3.1.26.5"/>
    </reaction>
</comment>
<comment type="subunit">
    <text evidence="1">Consists of a catalytic RNA component (M1 or rnpB) and a protein subunit.</text>
</comment>
<comment type="similarity">
    <text evidence="1">Belongs to the RnpA family.</text>
</comment>
<comment type="sequence caution" evidence="2">
    <conflict type="erroneous initiation">
        <sequence resource="EMBL-CDS" id="AAK03247"/>
    </conflict>
</comment>
<evidence type="ECO:0000255" key="1">
    <source>
        <dbReference type="HAMAP-Rule" id="MF_00227"/>
    </source>
</evidence>
<evidence type="ECO:0000305" key="2"/>
<name>RNPA_PASMU</name>
<feature type="chain" id="PRO_0000198503" description="Ribonuclease P protein component">
    <location>
        <begin position="1"/>
        <end position="119"/>
    </location>
</feature>